<evidence type="ECO:0000255" key="1">
    <source>
        <dbReference type="HAMAP-Rule" id="MF_01291"/>
    </source>
</evidence>
<gene>
    <name evidence="1" type="primary">garL</name>
    <name type="ordered locus">ECH74115_4438</name>
</gene>
<proteinExistence type="inferred from homology"/>
<comment type="function">
    <text evidence="1">Catalyzes the reversible retro-aldol cleavage of both 5-keto-4-deoxy-D-glucarate and 2-keto-3-deoxy-D-glucarate to pyruvate and tartronic semialdehyde.</text>
</comment>
<comment type="catalytic activity">
    <reaction evidence="1">
        <text>5-dehydro-4-deoxy-D-glucarate = 2-hydroxy-3-oxopropanoate + pyruvate</text>
        <dbReference type="Rhea" id="RHEA:27726"/>
        <dbReference type="ChEBI" id="CHEBI:15361"/>
        <dbReference type="ChEBI" id="CHEBI:42819"/>
        <dbReference type="ChEBI" id="CHEBI:57978"/>
    </reaction>
</comment>
<comment type="catalytic activity">
    <reaction evidence="1">
        <text>2-dehydro-3-deoxy-D-glucarate = 2-hydroxy-3-oxopropanoate + pyruvate</text>
        <dbReference type="Rhea" id="RHEA:10268"/>
        <dbReference type="ChEBI" id="CHEBI:15361"/>
        <dbReference type="ChEBI" id="CHEBI:57978"/>
        <dbReference type="ChEBI" id="CHEBI:58098"/>
        <dbReference type="EC" id="4.1.2.20"/>
    </reaction>
</comment>
<comment type="cofactor">
    <cofactor evidence="1">
        <name>Mg(2+)</name>
        <dbReference type="ChEBI" id="CHEBI:18420"/>
    </cofactor>
    <text evidence="1">Binds 1 Mg(2+) ion per subunit.</text>
</comment>
<comment type="pathway">
    <text evidence="1">Carbohydrate acid metabolism; galactarate degradation; D-glycerate from galactarate: step 2/3.</text>
</comment>
<comment type="subunit">
    <text evidence="1">Homohexamer; trimer of dimers.</text>
</comment>
<comment type="similarity">
    <text evidence="1">Belongs to the HpcH/HpaI aldolase family. KDGluc aldolase subfamily.</text>
</comment>
<dbReference type="EC" id="4.1.2.20" evidence="1"/>
<dbReference type="EMBL" id="CP001164">
    <property type="protein sequence ID" value="ACI36199.1"/>
    <property type="molecule type" value="Genomic_DNA"/>
</dbReference>
<dbReference type="RefSeq" id="WP_001058231.1">
    <property type="nucleotide sequence ID" value="NC_011353.1"/>
</dbReference>
<dbReference type="SMR" id="B5YS14"/>
<dbReference type="KEGG" id="ecf:ECH74115_4438"/>
<dbReference type="HOGENOM" id="CLU_059964_1_0_6"/>
<dbReference type="UniPathway" id="UPA00565">
    <property type="reaction ID" value="UER00630"/>
</dbReference>
<dbReference type="GO" id="GO:0005737">
    <property type="term" value="C:cytoplasm"/>
    <property type="evidence" value="ECO:0007669"/>
    <property type="project" value="TreeGrafter"/>
</dbReference>
<dbReference type="GO" id="GO:0008672">
    <property type="term" value="F:2-dehydro-3-deoxyglucarate aldolase activity"/>
    <property type="evidence" value="ECO:0007669"/>
    <property type="project" value="UniProtKB-UniRule"/>
</dbReference>
<dbReference type="GO" id="GO:0000287">
    <property type="term" value="F:magnesium ion binding"/>
    <property type="evidence" value="ECO:0007669"/>
    <property type="project" value="UniProtKB-UniRule"/>
</dbReference>
<dbReference type="GO" id="GO:0042838">
    <property type="term" value="P:D-glucarate catabolic process"/>
    <property type="evidence" value="ECO:0007669"/>
    <property type="project" value="UniProtKB-UniRule"/>
</dbReference>
<dbReference type="GO" id="GO:0046392">
    <property type="term" value="P:galactarate catabolic process"/>
    <property type="evidence" value="ECO:0007669"/>
    <property type="project" value="UniProtKB-UniRule"/>
</dbReference>
<dbReference type="FunFam" id="3.20.20.60:FF:000004">
    <property type="entry name" value="5-keto-4-deoxy-D-glucarate aldolase"/>
    <property type="match status" value="1"/>
</dbReference>
<dbReference type="Gene3D" id="3.20.20.60">
    <property type="entry name" value="Phosphoenolpyruvate-binding domains"/>
    <property type="match status" value="1"/>
</dbReference>
<dbReference type="HAMAP" id="MF_01291">
    <property type="entry name" value="KDGluc_aldolase"/>
    <property type="match status" value="1"/>
</dbReference>
<dbReference type="InterPro" id="IPR005000">
    <property type="entry name" value="Aldolase/citrate-lyase_domain"/>
</dbReference>
<dbReference type="InterPro" id="IPR017648">
    <property type="entry name" value="GarL"/>
</dbReference>
<dbReference type="InterPro" id="IPR050251">
    <property type="entry name" value="HpcH-HpaI_aldolase"/>
</dbReference>
<dbReference type="InterPro" id="IPR015813">
    <property type="entry name" value="Pyrv/PenolPyrv_kinase-like_dom"/>
</dbReference>
<dbReference type="InterPro" id="IPR040442">
    <property type="entry name" value="Pyrv_kinase-like_dom_sf"/>
</dbReference>
<dbReference type="NCBIfam" id="TIGR03239">
    <property type="entry name" value="GarL"/>
    <property type="match status" value="1"/>
</dbReference>
<dbReference type="NCBIfam" id="NF007849">
    <property type="entry name" value="PRK10558.1"/>
    <property type="match status" value="1"/>
</dbReference>
<dbReference type="PANTHER" id="PTHR30502">
    <property type="entry name" value="2-KETO-3-DEOXY-L-RHAMNONATE ALDOLASE"/>
    <property type="match status" value="1"/>
</dbReference>
<dbReference type="PANTHER" id="PTHR30502:SF4">
    <property type="entry name" value="5-KETO-4-DEOXY-D-GLUCARATE ALDOLASE"/>
    <property type="match status" value="1"/>
</dbReference>
<dbReference type="Pfam" id="PF03328">
    <property type="entry name" value="HpcH_HpaI"/>
    <property type="match status" value="1"/>
</dbReference>
<dbReference type="SUPFAM" id="SSF51621">
    <property type="entry name" value="Phosphoenolpyruvate/pyruvate domain"/>
    <property type="match status" value="1"/>
</dbReference>
<keyword id="KW-0456">Lyase</keyword>
<keyword id="KW-0460">Magnesium</keyword>
<keyword id="KW-0479">Metal-binding</keyword>
<feature type="chain" id="PRO_1000140405" description="5-keto-4-deoxy-D-glucarate aldolase">
    <location>
        <begin position="1"/>
        <end position="256"/>
    </location>
</feature>
<feature type="active site" description="Proton acceptor" evidence="1">
    <location>
        <position position="50"/>
    </location>
</feature>
<feature type="binding site" evidence="1">
    <location>
        <position position="151"/>
    </location>
    <ligand>
        <name>substrate</name>
    </ligand>
</feature>
<feature type="binding site" evidence="1">
    <location>
        <position position="153"/>
    </location>
    <ligand>
        <name>Mg(2+)</name>
        <dbReference type="ChEBI" id="CHEBI:18420"/>
    </ligand>
</feature>
<feature type="binding site" evidence="1">
    <location>
        <position position="178"/>
    </location>
    <ligand>
        <name>substrate</name>
    </ligand>
</feature>
<feature type="binding site" evidence="1">
    <location>
        <position position="179"/>
    </location>
    <ligand>
        <name>Mg(2+)</name>
        <dbReference type="ChEBI" id="CHEBI:18420"/>
    </ligand>
</feature>
<feature type="binding site" evidence="1">
    <location>
        <position position="179"/>
    </location>
    <ligand>
        <name>substrate</name>
    </ligand>
</feature>
<feature type="site" description="Transition state stabilizer" evidence="1">
    <location>
        <position position="75"/>
    </location>
</feature>
<feature type="site" description="Increases basicity of active site His" evidence="1">
    <location>
        <position position="89"/>
    </location>
</feature>
<accession>B5YS14</accession>
<organism>
    <name type="scientific">Escherichia coli O157:H7 (strain EC4115 / EHEC)</name>
    <dbReference type="NCBI Taxonomy" id="444450"/>
    <lineage>
        <taxon>Bacteria</taxon>
        <taxon>Pseudomonadati</taxon>
        <taxon>Pseudomonadota</taxon>
        <taxon>Gammaproteobacteria</taxon>
        <taxon>Enterobacterales</taxon>
        <taxon>Enterobacteriaceae</taxon>
        <taxon>Escherichia</taxon>
    </lineage>
</organism>
<name>GARL_ECO5E</name>
<protein>
    <recommendedName>
        <fullName evidence="1">5-keto-4-deoxy-D-glucarate aldolase</fullName>
        <shortName evidence="1">KDGluc aldolase</shortName>
        <shortName evidence="1">KDGlucA</shortName>
        <ecNumber evidence="1">4.1.2.20</ecNumber>
    </recommendedName>
    <alternativeName>
        <fullName evidence="1">2-dehydro-3-deoxy-D-glucarate aldolase</fullName>
    </alternativeName>
    <alternativeName>
        <fullName evidence="1">2-keto-3-deoxy-D-glucarate aldolase</fullName>
    </alternativeName>
    <alternativeName>
        <fullName evidence="1">5-dehydro-4-deoxy-D-glucarate aldolase</fullName>
    </alternativeName>
    <alternativeName>
        <fullName evidence="1">Alpha-keto-beta-deoxy-D-glucarate aldolase</fullName>
    </alternativeName>
</protein>
<sequence length="256" mass="27429">MNNDVFPNKFKAALAAKQVQIGCWSALSNPISTEVLGLAGFDWLVLDGEHAPNDISTFIPQLMALKGSASAPVVRVPTNEPVIIKRLLDIGFYNFLIPFVETKEEAEQAVASTRYPPEGIRGVSVSHRANMFGTVADYFAQSNKNITILVQIESQQGVDNVDAIAATEGVDGIFVGPSDLAAALGHLGNASHPDVQKTIQHIFNRASAHGKPSGILAPVEADARRYLEWGATFVAVGSDLGVFRSATQKLADTFKK</sequence>
<reference key="1">
    <citation type="journal article" date="2011" name="Proc. Natl. Acad. Sci. U.S.A.">
        <title>Genomic anatomy of Escherichia coli O157:H7 outbreaks.</title>
        <authorList>
            <person name="Eppinger M."/>
            <person name="Mammel M.K."/>
            <person name="Leclerc J.E."/>
            <person name="Ravel J."/>
            <person name="Cebula T.A."/>
        </authorList>
    </citation>
    <scope>NUCLEOTIDE SEQUENCE [LARGE SCALE GENOMIC DNA]</scope>
    <source>
        <strain>EC4115 / EHEC</strain>
    </source>
</reference>